<accession>A9N5C4</accession>
<evidence type="ECO:0000255" key="1">
    <source>
        <dbReference type="HAMAP-Rule" id="MF_01290"/>
    </source>
</evidence>
<keyword id="KW-0456">Lyase</keyword>
<keyword id="KW-0460">Magnesium</keyword>
<keyword id="KW-0479">Metal-binding</keyword>
<proteinExistence type="inferred from homology"/>
<feature type="chain" id="PRO_0000353175" description="2-keto-3-deoxy-L-rhamnonate aldolase">
    <location>
        <begin position="1"/>
        <end position="267"/>
    </location>
</feature>
<feature type="active site" description="Proton acceptor" evidence="1">
    <location>
        <position position="49"/>
    </location>
</feature>
<feature type="binding site" evidence="1">
    <location>
        <position position="151"/>
    </location>
    <ligand>
        <name>substrate</name>
    </ligand>
</feature>
<feature type="binding site" evidence="1">
    <location>
        <position position="153"/>
    </location>
    <ligand>
        <name>Mg(2+)</name>
        <dbReference type="ChEBI" id="CHEBI:18420"/>
    </ligand>
</feature>
<feature type="binding site" evidence="1">
    <location>
        <position position="178"/>
    </location>
    <ligand>
        <name>substrate</name>
    </ligand>
</feature>
<feature type="binding site" evidence="1">
    <location>
        <position position="179"/>
    </location>
    <ligand>
        <name>Mg(2+)</name>
        <dbReference type="ChEBI" id="CHEBI:18420"/>
    </ligand>
</feature>
<feature type="binding site" evidence="1">
    <location>
        <position position="179"/>
    </location>
    <ligand>
        <name>substrate</name>
    </ligand>
</feature>
<feature type="site" description="Transition state stabilizer" evidence="1">
    <location>
        <position position="74"/>
    </location>
</feature>
<feature type="site" description="Increases basicity of active site His" evidence="1">
    <location>
        <position position="88"/>
    </location>
</feature>
<organism>
    <name type="scientific">Salmonella paratyphi B (strain ATCC BAA-1250 / SPB7)</name>
    <dbReference type="NCBI Taxonomy" id="1016998"/>
    <lineage>
        <taxon>Bacteria</taxon>
        <taxon>Pseudomonadati</taxon>
        <taxon>Pseudomonadota</taxon>
        <taxon>Gammaproteobacteria</taxon>
        <taxon>Enterobacterales</taxon>
        <taxon>Enterobacteriaceae</taxon>
        <taxon>Salmonella</taxon>
    </lineage>
</organism>
<protein>
    <recommendedName>
        <fullName evidence="1">2-keto-3-deoxy-L-rhamnonate aldolase</fullName>
        <shortName evidence="1">KDR aldolase</shortName>
        <ecNumber evidence="1">4.1.2.53</ecNumber>
    </recommendedName>
    <alternativeName>
        <fullName evidence="1">2-dehydro-3-deoxyrhamnonate aldolase</fullName>
    </alternativeName>
</protein>
<comment type="function">
    <text evidence="1">Catalyzes the reversible retro-aldol cleavage of 2-keto-3-deoxy-L-rhamnonate (KDR) to pyruvate and lactaldehyde.</text>
</comment>
<comment type="catalytic activity">
    <reaction evidence="1">
        <text>2-dehydro-3-deoxy-L-rhamnonate = (S)-lactaldehyde + pyruvate</text>
        <dbReference type="Rhea" id="RHEA:25784"/>
        <dbReference type="ChEBI" id="CHEBI:15361"/>
        <dbReference type="ChEBI" id="CHEBI:18041"/>
        <dbReference type="ChEBI" id="CHEBI:58371"/>
        <dbReference type="EC" id="4.1.2.53"/>
    </reaction>
</comment>
<comment type="cofactor">
    <cofactor evidence="1">
        <name>Mg(2+)</name>
        <dbReference type="ChEBI" id="CHEBI:18420"/>
    </cofactor>
    <text evidence="1">Binds 1 Mg(2+) ion per subunit.</text>
</comment>
<comment type="subunit">
    <text evidence="1">Homohexamer.</text>
</comment>
<comment type="similarity">
    <text evidence="1">Belongs to the HpcH/HpaI aldolase family. KDR aldolase subfamily.</text>
</comment>
<sequence>MNALLSNPFKEGLRKGDTQIGLWLSSTTSYMAEIAATSGYDWLLIDGEHAPNTVQDLYHQLQAIAPYASQPVIRPIEGSKALIKQVLDIGAQTLLIPMVDTAEQARQVVSATRYPPLGQRGVGASVARAARWGRIDNYMAQANESLCLLVQVESKVALENLDAILEVEGIDGVFIGPADLSASLGYPDNAGHPEVQRIIESCIYRIRAAGKAAGFLAVDPAMAQKCLAWGANFVAVGVDTMLYTEALDSRLAMFKSVQSVSTAKRSY</sequence>
<dbReference type="EC" id="4.1.2.53" evidence="1"/>
<dbReference type="EMBL" id="CP000886">
    <property type="protein sequence ID" value="ABX66120.1"/>
    <property type="molecule type" value="Genomic_DNA"/>
</dbReference>
<dbReference type="SMR" id="A9N5C4"/>
<dbReference type="KEGG" id="spq:SPAB_00694"/>
<dbReference type="PATRIC" id="fig|1016998.12.peg.653"/>
<dbReference type="HOGENOM" id="CLU_059964_1_0_6"/>
<dbReference type="BioCyc" id="SENT1016998:SPAB_RS02890-MONOMER"/>
<dbReference type="Proteomes" id="UP000008556">
    <property type="component" value="Chromosome"/>
</dbReference>
<dbReference type="GO" id="GO:0005737">
    <property type="term" value="C:cytoplasm"/>
    <property type="evidence" value="ECO:0007669"/>
    <property type="project" value="TreeGrafter"/>
</dbReference>
<dbReference type="GO" id="GO:0106099">
    <property type="term" value="F:2-keto-3-deoxy-L-rhamnonate aldolase activity"/>
    <property type="evidence" value="ECO:0007669"/>
    <property type="project" value="UniProtKB-EC"/>
</dbReference>
<dbReference type="GO" id="GO:0000287">
    <property type="term" value="F:magnesium ion binding"/>
    <property type="evidence" value="ECO:0007669"/>
    <property type="project" value="UniProtKB-UniRule"/>
</dbReference>
<dbReference type="FunFam" id="3.20.20.60:FF:000004">
    <property type="entry name" value="5-keto-4-deoxy-D-glucarate aldolase"/>
    <property type="match status" value="1"/>
</dbReference>
<dbReference type="Gene3D" id="3.20.20.60">
    <property type="entry name" value="Phosphoenolpyruvate-binding domains"/>
    <property type="match status" value="1"/>
</dbReference>
<dbReference type="HAMAP" id="MF_01290">
    <property type="entry name" value="KDR_aldolase"/>
    <property type="match status" value="1"/>
</dbReference>
<dbReference type="InterPro" id="IPR005000">
    <property type="entry name" value="Aldolase/citrate-lyase_domain"/>
</dbReference>
<dbReference type="InterPro" id="IPR050251">
    <property type="entry name" value="HpcH-HpaI_aldolase"/>
</dbReference>
<dbReference type="InterPro" id="IPR023593">
    <property type="entry name" value="KDR_aldolase"/>
</dbReference>
<dbReference type="InterPro" id="IPR015813">
    <property type="entry name" value="Pyrv/PenolPyrv_kinase-like_dom"/>
</dbReference>
<dbReference type="InterPro" id="IPR040442">
    <property type="entry name" value="Pyrv_kinase-like_dom_sf"/>
</dbReference>
<dbReference type="NCBIfam" id="NF007521">
    <property type="entry name" value="PRK10128.1"/>
    <property type="match status" value="1"/>
</dbReference>
<dbReference type="PANTHER" id="PTHR30502">
    <property type="entry name" value="2-KETO-3-DEOXY-L-RHAMNONATE ALDOLASE"/>
    <property type="match status" value="1"/>
</dbReference>
<dbReference type="PANTHER" id="PTHR30502:SF5">
    <property type="entry name" value="2-KETO-3-DEOXY-L-RHAMNONATE ALDOLASE"/>
    <property type="match status" value="1"/>
</dbReference>
<dbReference type="Pfam" id="PF03328">
    <property type="entry name" value="HpcH_HpaI"/>
    <property type="match status" value="1"/>
</dbReference>
<dbReference type="SUPFAM" id="SSF51621">
    <property type="entry name" value="Phosphoenolpyruvate/pyruvate domain"/>
    <property type="match status" value="1"/>
</dbReference>
<gene>
    <name evidence="1" type="primary">rhmA</name>
    <name type="ordered locus">SPAB_00694</name>
</gene>
<name>RHMA_SALPB</name>
<reference key="1">
    <citation type="submission" date="2007-11" db="EMBL/GenBank/DDBJ databases">
        <authorList>
            <consortium name="The Salmonella enterica serovar Paratyphi B Genome Sequencing Project"/>
            <person name="McClelland M."/>
            <person name="Sanderson E.K."/>
            <person name="Porwollik S."/>
            <person name="Spieth J."/>
            <person name="Clifton W.S."/>
            <person name="Fulton R."/>
            <person name="Cordes M."/>
            <person name="Wollam A."/>
            <person name="Shah N."/>
            <person name="Pepin K."/>
            <person name="Bhonagiri V."/>
            <person name="Nash W."/>
            <person name="Johnson M."/>
            <person name="Thiruvilangam P."/>
            <person name="Wilson R."/>
        </authorList>
    </citation>
    <scope>NUCLEOTIDE SEQUENCE [LARGE SCALE GENOMIC DNA]</scope>
    <source>
        <strain>ATCC BAA-1250 / SPB7</strain>
    </source>
</reference>